<feature type="chain" id="PRO_1000086533" description="Large ribosomal subunit protein uL4">
    <location>
        <begin position="1"/>
        <end position="207"/>
    </location>
</feature>
<comment type="function">
    <text evidence="1">One of the primary rRNA binding proteins, this protein initially binds near the 5'-end of the 23S rRNA. It is important during the early stages of 50S assembly. It makes multiple contacts with different domains of the 23S rRNA in the assembled 50S subunit and ribosome.</text>
</comment>
<comment type="function">
    <text evidence="1">Forms part of the polypeptide exit tunnel.</text>
</comment>
<comment type="subunit">
    <text evidence="1">Part of the 50S ribosomal subunit.</text>
</comment>
<comment type="similarity">
    <text evidence="1">Belongs to the universal ribosomal protein uL4 family.</text>
</comment>
<sequence length="207" mass="22961">MKTKILSLANEEVGEISLNEDIFAVEFIRDDIIKQVIDWQRAKAMSGNHKTKTVSEVLGTTKKPFKQKGTGNARQGSLRSVQMRGGGVAHGPRVRSHATKLPKKVRKLGLIHALSEKCAEGKLLVIDSLKLDKPKTSALVNILNKFQGKSFFVIDGNEVDINFSLAAKNIYNTVVVPQIGANVYDIIRHEYVLLSQEAVSVLEERLR</sequence>
<name>RL4_RICRO</name>
<reference key="1">
    <citation type="journal article" date="2008" name="Infect. Immun.">
        <title>Genomic comparison of virulent Rickettsia rickettsii Sheila Smith and avirulent Rickettsia rickettsii Iowa.</title>
        <authorList>
            <person name="Ellison D.W."/>
            <person name="Clark T.R."/>
            <person name="Sturdevant D.E."/>
            <person name="Virtaneva K."/>
            <person name="Porcella S.F."/>
            <person name="Hackstadt T."/>
        </authorList>
    </citation>
    <scope>NUCLEOTIDE SEQUENCE [LARGE SCALE GENOMIC DNA]</scope>
    <source>
        <strain>Iowa</strain>
    </source>
</reference>
<keyword id="KW-0687">Ribonucleoprotein</keyword>
<keyword id="KW-0689">Ribosomal protein</keyword>
<keyword id="KW-0694">RNA-binding</keyword>
<keyword id="KW-0699">rRNA-binding</keyword>
<organism>
    <name type="scientific">Rickettsia rickettsii (strain Iowa)</name>
    <dbReference type="NCBI Taxonomy" id="452659"/>
    <lineage>
        <taxon>Bacteria</taxon>
        <taxon>Pseudomonadati</taxon>
        <taxon>Pseudomonadota</taxon>
        <taxon>Alphaproteobacteria</taxon>
        <taxon>Rickettsiales</taxon>
        <taxon>Rickettsiaceae</taxon>
        <taxon>Rickettsieae</taxon>
        <taxon>Rickettsia</taxon>
        <taxon>spotted fever group</taxon>
    </lineage>
</organism>
<evidence type="ECO:0000255" key="1">
    <source>
        <dbReference type="HAMAP-Rule" id="MF_01328"/>
    </source>
</evidence>
<evidence type="ECO:0000305" key="2"/>
<dbReference type="EMBL" id="CP000766">
    <property type="protein sequence ID" value="ABY72969.1"/>
    <property type="molecule type" value="Genomic_DNA"/>
</dbReference>
<dbReference type="RefSeq" id="WP_012151151.1">
    <property type="nucleotide sequence ID" value="NC_010263.3"/>
</dbReference>
<dbReference type="SMR" id="B0BUQ9"/>
<dbReference type="GeneID" id="79937669"/>
<dbReference type="KEGG" id="rrj:RrIowa_1196"/>
<dbReference type="eggNOG" id="COG0088">
    <property type="taxonomic scope" value="Bacteria"/>
</dbReference>
<dbReference type="HOGENOM" id="CLU_041575_5_1_5"/>
<dbReference type="Proteomes" id="UP000000796">
    <property type="component" value="Chromosome"/>
</dbReference>
<dbReference type="GO" id="GO:1990904">
    <property type="term" value="C:ribonucleoprotein complex"/>
    <property type="evidence" value="ECO:0007669"/>
    <property type="project" value="UniProtKB-KW"/>
</dbReference>
<dbReference type="GO" id="GO:0005840">
    <property type="term" value="C:ribosome"/>
    <property type="evidence" value="ECO:0007669"/>
    <property type="project" value="UniProtKB-KW"/>
</dbReference>
<dbReference type="GO" id="GO:0019843">
    <property type="term" value="F:rRNA binding"/>
    <property type="evidence" value="ECO:0007669"/>
    <property type="project" value="UniProtKB-UniRule"/>
</dbReference>
<dbReference type="GO" id="GO:0003735">
    <property type="term" value="F:structural constituent of ribosome"/>
    <property type="evidence" value="ECO:0007669"/>
    <property type="project" value="InterPro"/>
</dbReference>
<dbReference type="GO" id="GO:0006412">
    <property type="term" value="P:translation"/>
    <property type="evidence" value="ECO:0007669"/>
    <property type="project" value="UniProtKB-UniRule"/>
</dbReference>
<dbReference type="FunFam" id="3.40.1370.10:FF:000015">
    <property type="entry name" value="50S ribosomal protein L4"/>
    <property type="match status" value="1"/>
</dbReference>
<dbReference type="Gene3D" id="3.40.1370.10">
    <property type="match status" value="1"/>
</dbReference>
<dbReference type="HAMAP" id="MF_01328_B">
    <property type="entry name" value="Ribosomal_uL4_B"/>
    <property type="match status" value="1"/>
</dbReference>
<dbReference type="InterPro" id="IPR002136">
    <property type="entry name" value="Ribosomal_uL4"/>
</dbReference>
<dbReference type="InterPro" id="IPR013005">
    <property type="entry name" value="Ribosomal_uL4-like"/>
</dbReference>
<dbReference type="InterPro" id="IPR023574">
    <property type="entry name" value="Ribosomal_uL4_dom_sf"/>
</dbReference>
<dbReference type="NCBIfam" id="TIGR03953">
    <property type="entry name" value="rplD_bact"/>
    <property type="match status" value="1"/>
</dbReference>
<dbReference type="PANTHER" id="PTHR10746">
    <property type="entry name" value="50S RIBOSOMAL PROTEIN L4"/>
    <property type="match status" value="1"/>
</dbReference>
<dbReference type="PANTHER" id="PTHR10746:SF6">
    <property type="entry name" value="LARGE RIBOSOMAL SUBUNIT PROTEIN UL4M"/>
    <property type="match status" value="1"/>
</dbReference>
<dbReference type="Pfam" id="PF00573">
    <property type="entry name" value="Ribosomal_L4"/>
    <property type="match status" value="1"/>
</dbReference>
<dbReference type="SUPFAM" id="SSF52166">
    <property type="entry name" value="Ribosomal protein L4"/>
    <property type="match status" value="1"/>
</dbReference>
<proteinExistence type="inferred from homology"/>
<protein>
    <recommendedName>
        <fullName evidence="1">Large ribosomal subunit protein uL4</fullName>
    </recommendedName>
    <alternativeName>
        <fullName evidence="2">50S ribosomal protein L4</fullName>
    </alternativeName>
</protein>
<accession>B0BUQ9</accession>
<gene>
    <name evidence="1" type="primary">rplD</name>
    <name type="ordered locus">RrIowa_1196</name>
</gene>